<gene>
    <name type="primary">CGB</name>
</gene>
<dbReference type="EMBL" id="DQ200808">
    <property type="protein sequence ID" value="ABA54987.1"/>
    <property type="molecule type" value="mRNA"/>
</dbReference>
<dbReference type="RefSeq" id="NP_001295451.1">
    <property type="nucleotide sequence ID" value="NM_001308522.1"/>
</dbReference>
<dbReference type="SMR" id="Q3HRV3"/>
<dbReference type="STRING" id="37293.ENSANAP00000015832"/>
<dbReference type="GlyCosmos" id="Q3HRV3">
    <property type="glycosylation" value="4 sites, No reported glycans"/>
</dbReference>
<dbReference type="Ensembl" id="ENSANAT00000033677.1">
    <property type="protein sequence ID" value="ENSANAP00000015834.1"/>
    <property type="gene ID" value="ENSANAG00000025792.1"/>
</dbReference>
<dbReference type="GeneID" id="105722736"/>
<dbReference type="KEGG" id="anan:105722736"/>
<dbReference type="GeneTree" id="ENSGT00940000163162"/>
<dbReference type="OMA" id="YHELHFA"/>
<dbReference type="OrthoDB" id="9525526at2759"/>
<dbReference type="Proteomes" id="UP000233020">
    <property type="component" value="Unplaced"/>
</dbReference>
<dbReference type="GO" id="GO:0005737">
    <property type="term" value="C:cytoplasm"/>
    <property type="evidence" value="ECO:0007669"/>
    <property type="project" value="TreeGrafter"/>
</dbReference>
<dbReference type="GO" id="GO:0005615">
    <property type="term" value="C:extracellular space"/>
    <property type="evidence" value="ECO:0007669"/>
    <property type="project" value="TreeGrafter"/>
</dbReference>
<dbReference type="GO" id="GO:0005179">
    <property type="term" value="F:hormone activity"/>
    <property type="evidence" value="ECO:0007669"/>
    <property type="project" value="UniProtKB-KW"/>
</dbReference>
<dbReference type="GO" id="GO:0007186">
    <property type="term" value="P:G protein-coupled receptor signaling pathway"/>
    <property type="evidence" value="ECO:0007669"/>
    <property type="project" value="TreeGrafter"/>
</dbReference>
<dbReference type="CDD" id="cd00069">
    <property type="entry name" value="GHB_like"/>
    <property type="match status" value="1"/>
</dbReference>
<dbReference type="FunFam" id="2.10.90.10:FF:000007">
    <property type="entry name" value="Luteinizing hormone beta subunit"/>
    <property type="match status" value="1"/>
</dbReference>
<dbReference type="Gene3D" id="2.10.90.10">
    <property type="entry name" value="Cystine-knot cytokines"/>
    <property type="match status" value="1"/>
</dbReference>
<dbReference type="InterPro" id="IPR029034">
    <property type="entry name" value="Cystine-knot_cytokine"/>
</dbReference>
<dbReference type="InterPro" id="IPR006208">
    <property type="entry name" value="Glyco_hormone_CN"/>
</dbReference>
<dbReference type="InterPro" id="IPR001545">
    <property type="entry name" value="Gonadotropin_bsu"/>
</dbReference>
<dbReference type="InterPro" id="IPR018245">
    <property type="entry name" value="Gonadotropin_bsu_CS"/>
</dbReference>
<dbReference type="PANTHER" id="PTHR11515">
    <property type="entry name" value="GLYCOPROTEIN HORMONE BETA CHAIN"/>
    <property type="match status" value="1"/>
</dbReference>
<dbReference type="PANTHER" id="PTHR11515:SF11">
    <property type="entry name" value="LUTROPIN SUBUNIT BETA"/>
    <property type="match status" value="1"/>
</dbReference>
<dbReference type="Pfam" id="PF00007">
    <property type="entry name" value="Cys_knot"/>
    <property type="match status" value="1"/>
</dbReference>
<dbReference type="SMART" id="SM00068">
    <property type="entry name" value="GHB"/>
    <property type="match status" value="1"/>
</dbReference>
<dbReference type="SUPFAM" id="SSF57501">
    <property type="entry name" value="Cystine-knot cytokines"/>
    <property type="match status" value="1"/>
</dbReference>
<dbReference type="PROSITE" id="PS00261">
    <property type="entry name" value="GLYCO_HORMONE_BETA_1"/>
    <property type="match status" value="1"/>
</dbReference>
<dbReference type="PROSITE" id="PS00689">
    <property type="entry name" value="GLYCO_HORMONE_BETA_2"/>
    <property type="match status" value="1"/>
</dbReference>
<reference key="1">
    <citation type="journal article" date="2008" name="Gen. Comp. Endocrinol.">
        <title>Molecular cloning of pituitary glycoprotein alpha-subunit and follicle stimulating hormone and chorionic gonadotropin beta-subunits from New World squirrel monkey and owl monkey.</title>
        <authorList>
            <person name="Scammell J.G."/>
            <person name="Funkhouser J.D."/>
            <person name="Moyer F.S."/>
            <person name="Gibson S.V."/>
            <person name="Willis D.L."/>
        </authorList>
    </citation>
    <scope>NUCLEOTIDE SEQUENCE [MRNA]</scope>
</reference>
<feature type="signal peptide" evidence="1">
    <location>
        <begin position="1"/>
        <end position="20"/>
    </location>
</feature>
<feature type="chain" id="PRO_0000253468" description="Choriogonadotropin subunit beta">
    <location>
        <begin position="21"/>
        <end position="164"/>
    </location>
</feature>
<feature type="region of interest" description="Disordered" evidence="3">
    <location>
        <begin position="133"/>
        <end position="164"/>
    </location>
</feature>
<feature type="glycosylation site" description="N-linked (GlcNAc...) asparagine" evidence="2">
    <location>
        <position position="50"/>
    </location>
</feature>
<feature type="glycosylation site" description="O-linked (GalNAc...) serine" evidence="1">
    <location>
        <position position="140"/>
    </location>
</feature>
<feature type="glycosylation site" description="N-linked (GlcNAc...) asparagine" evidence="2">
    <location>
        <position position="146"/>
    </location>
</feature>
<feature type="glycosylation site" description="O-linked (GalNAc...) serine" evidence="1">
    <location>
        <position position="151"/>
    </location>
</feature>
<feature type="disulfide bond" evidence="1">
    <location>
        <begin position="29"/>
        <end position="77"/>
    </location>
</feature>
<feature type="disulfide bond" evidence="1">
    <location>
        <begin position="43"/>
        <end position="92"/>
    </location>
</feature>
<feature type="disulfide bond" evidence="1">
    <location>
        <begin position="46"/>
        <end position="130"/>
    </location>
</feature>
<feature type="disulfide bond" evidence="1">
    <location>
        <begin position="54"/>
        <end position="108"/>
    </location>
</feature>
<feature type="disulfide bond" evidence="1">
    <location>
        <begin position="58"/>
        <end position="110"/>
    </location>
</feature>
<feature type="disulfide bond" evidence="1">
    <location>
        <begin position="113"/>
        <end position="120"/>
    </location>
</feature>
<sequence length="164" mass="17824">MEMLQGLLLCLLLSTGGAWASNEPLRPLCRPTHAILAAEKEGCPVCVAFNTTICAGYCSSMVRVLQTVMPPLPQLVCNYHELRFTSVRLPGCRRGVNPVVYFPVAVSCRCALCRRSYSDCGNLKSEPLGCDYHTSQDSSSKDPPRNLTSPSQLPEPADAPLVPQ</sequence>
<organism>
    <name type="scientific">Aotus nancymaae</name>
    <name type="common">Ma's night monkey</name>
    <dbReference type="NCBI Taxonomy" id="37293"/>
    <lineage>
        <taxon>Eukaryota</taxon>
        <taxon>Metazoa</taxon>
        <taxon>Chordata</taxon>
        <taxon>Craniata</taxon>
        <taxon>Vertebrata</taxon>
        <taxon>Euteleostomi</taxon>
        <taxon>Mammalia</taxon>
        <taxon>Eutheria</taxon>
        <taxon>Euarchontoglires</taxon>
        <taxon>Primates</taxon>
        <taxon>Haplorrhini</taxon>
        <taxon>Platyrrhini</taxon>
        <taxon>Aotidae</taxon>
        <taxon>Aotus</taxon>
    </lineage>
</organism>
<proteinExistence type="evidence at transcript level"/>
<evidence type="ECO:0000250" key="1"/>
<evidence type="ECO:0000255" key="2"/>
<evidence type="ECO:0000256" key="3">
    <source>
        <dbReference type="SAM" id="MobiDB-lite"/>
    </source>
</evidence>
<evidence type="ECO:0000305" key="4"/>
<keyword id="KW-1015">Disulfide bond</keyword>
<keyword id="KW-0325">Glycoprotein</keyword>
<keyword id="KW-0372">Hormone</keyword>
<keyword id="KW-1185">Reference proteome</keyword>
<keyword id="KW-0964">Secreted</keyword>
<keyword id="KW-0732">Signal</keyword>
<name>CGHB_AOTNA</name>
<protein>
    <recommendedName>
        <fullName>Choriogonadotropin subunit beta</fullName>
        <shortName>CG-beta</shortName>
    </recommendedName>
    <alternativeName>
        <fullName>Chorionic gonadotrophin chain beta</fullName>
    </alternativeName>
</protein>
<comment type="function">
    <text evidence="1">Stimulates the ovaries to synthesize the steroids that are essential for the maintenance of pregnancy.</text>
</comment>
<comment type="subunit">
    <text evidence="1">Heterodimer of a common alpha chain and a unique beta chain which confers biological specificity to thyrotropin, lutropin, follitropin and gonadotropin.</text>
</comment>
<comment type="subcellular location">
    <subcellularLocation>
        <location evidence="1">Secreted</location>
    </subcellularLocation>
</comment>
<comment type="similarity">
    <text evidence="4">Belongs to the glycoprotein hormones subunit beta family.</text>
</comment>
<accession>Q3HRV3</accession>